<sequence>MSIKTEEISALIKQQLANYNEELAVEEVGTVTYVGDGIARAHGLENALSSELLEFSNGSYGVAQNLETNDVGIIILGEYENIREGDQVKRTGRIMEVPVGDALIGRVVNPLGQPVDGRGEIKTDKTRPIEKKAPGVMARQSVSEPLQTGLKAIDALVPIGRGQRELIIGDRKTGKTSVAIDTIINQKGQDMICIYVAIGQKESTVRTQVETLRRYGAMDYTIVVEAGPSQPAPLLYIAPYAGAAMGEEFMYNGKHVLIVYDDLSKQAAAYREISLLLRRPPGREAYPGDIFYLHSRLLERAAKLSDELGGGSMTALPIIETQAGDISAYIPTNVISITDGQIFLESDLFYSGTRPAIDAGSSVSRVGGAAQTKAMKKVSGTLRLDLSSYRELEAFTQFGSDLDAATQAKLNRGKRTVEVLKQPLHKPLPFEQQTVILYALTHGFIDDVPVDDIMRYESGLNDYLESNAKDLMDEIRQTTKLPDTDKLDAAIKAFTEGFVPEQAADDKDSDK</sequence>
<comment type="function">
    <text evidence="1">Produces ATP from ADP in the presence of a proton gradient across the membrane. The alpha chain is a regulatory subunit.</text>
</comment>
<comment type="catalytic activity">
    <reaction evidence="1">
        <text>ATP + H2O + 4 H(+)(in) = ADP + phosphate + 5 H(+)(out)</text>
        <dbReference type="Rhea" id="RHEA:57720"/>
        <dbReference type="ChEBI" id="CHEBI:15377"/>
        <dbReference type="ChEBI" id="CHEBI:15378"/>
        <dbReference type="ChEBI" id="CHEBI:30616"/>
        <dbReference type="ChEBI" id="CHEBI:43474"/>
        <dbReference type="ChEBI" id="CHEBI:456216"/>
        <dbReference type="EC" id="7.1.2.2"/>
    </reaction>
</comment>
<comment type="subunit">
    <text evidence="1">F-type ATPases have 2 components, CF(1) - the catalytic core - and CF(0) - the membrane proton channel. CF(1) has five subunits: alpha(3), beta(3), gamma(1), delta(1), epsilon(1). CF(0) has three main subunits: a(1), b(2) and c(9-12). The alpha and beta chains form an alternating ring which encloses part of the gamma chain. CF(1) is attached to CF(0) by a central stalk formed by the gamma and epsilon chains, while a peripheral stalk is formed by the delta and b chains.</text>
</comment>
<comment type="subcellular location">
    <subcellularLocation>
        <location evidence="1">Cell membrane</location>
        <topology evidence="1">Peripheral membrane protein</topology>
    </subcellularLocation>
</comment>
<comment type="similarity">
    <text evidence="1">Belongs to the ATPase alpha/beta chains family.</text>
</comment>
<name>ATPA_LATSS</name>
<accession>Q38WK3</accession>
<gene>
    <name evidence="1" type="primary">atpA</name>
    <name type="ordered locus">LCA_1128</name>
</gene>
<protein>
    <recommendedName>
        <fullName evidence="1">ATP synthase subunit alpha</fullName>
        <ecNumber evidence="1">7.1.2.2</ecNumber>
    </recommendedName>
    <alternativeName>
        <fullName evidence="1">ATP synthase F1 sector subunit alpha</fullName>
    </alternativeName>
    <alternativeName>
        <fullName evidence="1">F-ATPase subunit alpha</fullName>
    </alternativeName>
</protein>
<dbReference type="EC" id="7.1.2.2" evidence="1"/>
<dbReference type="EMBL" id="CR936503">
    <property type="protein sequence ID" value="CAI55429.1"/>
    <property type="molecule type" value="Genomic_DNA"/>
</dbReference>
<dbReference type="RefSeq" id="WP_011374827.1">
    <property type="nucleotide sequence ID" value="NC_007576.1"/>
</dbReference>
<dbReference type="SMR" id="Q38WK3"/>
<dbReference type="STRING" id="314315.LCA_1128"/>
<dbReference type="KEGG" id="lsa:LCA_1128"/>
<dbReference type="eggNOG" id="COG0056">
    <property type="taxonomic scope" value="Bacteria"/>
</dbReference>
<dbReference type="HOGENOM" id="CLU_010091_2_1_9"/>
<dbReference type="OrthoDB" id="9803053at2"/>
<dbReference type="Proteomes" id="UP000002707">
    <property type="component" value="Chromosome"/>
</dbReference>
<dbReference type="GO" id="GO:0005886">
    <property type="term" value="C:plasma membrane"/>
    <property type="evidence" value="ECO:0007669"/>
    <property type="project" value="UniProtKB-SubCell"/>
</dbReference>
<dbReference type="GO" id="GO:0045259">
    <property type="term" value="C:proton-transporting ATP synthase complex"/>
    <property type="evidence" value="ECO:0007669"/>
    <property type="project" value="UniProtKB-KW"/>
</dbReference>
<dbReference type="GO" id="GO:0043531">
    <property type="term" value="F:ADP binding"/>
    <property type="evidence" value="ECO:0007669"/>
    <property type="project" value="TreeGrafter"/>
</dbReference>
<dbReference type="GO" id="GO:0005524">
    <property type="term" value="F:ATP binding"/>
    <property type="evidence" value="ECO:0007669"/>
    <property type="project" value="UniProtKB-UniRule"/>
</dbReference>
<dbReference type="GO" id="GO:0046933">
    <property type="term" value="F:proton-transporting ATP synthase activity, rotational mechanism"/>
    <property type="evidence" value="ECO:0007669"/>
    <property type="project" value="UniProtKB-UniRule"/>
</dbReference>
<dbReference type="CDD" id="cd18113">
    <property type="entry name" value="ATP-synt_F1_alpha_C"/>
    <property type="match status" value="1"/>
</dbReference>
<dbReference type="CDD" id="cd18116">
    <property type="entry name" value="ATP-synt_F1_alpha_N"/>
    <property type="match status" value="1"/>
</dbReference>
<dbReference type="CDD" id="cd01132">
    <property type="entry name" value="F1-ATPase_alpha_CD"/>
    <property type="match status" value="1"/>
</dbReference>
<dbReference type="FunFam" id="1.20.150.20:FF:000001">
    <property type="entry name" value="ATP synthase subunit alpha"/>
    <property type="match status" value="1"/>
</dbReference>
<dbReference type="FunFam" id="2.40.30.20:FF:000001">
    <property type="entry name" value="ATP synthase subunit alpha"/>
    <property type="match status" value="1"/>
</dbReference>
<dbReference type="FunFam" id="3.40.50.300:FF:000002">
    <property type="entry name" value="ATP synthase subunit alpha"/>
    <property type="match status" value="1"/>
</dbReference>
<dbReference type="Gene3D" id="2.40.30.20">
    <property type="match status" value="1"/>
</dbReference>
<dbReference type="Gene3D" id="1.20.150.20">
    <property type="entry name" value="ATP synthase alpha/beta chain, C-terminal domain"/>
    <property type="match status" value="1"/>
</dbReference>
<dbReference type="Gene3D" id="3.40.50.300">
    <property type="entry name" value="P-loop containing nucleotide triphosphate hydrolases"/>
    <property type="match status" value="1"/>
</dbReference>
<dbReference type="HAMAP" id="MF_01346">
    <property type="entry name" value="ATP_synth_alpha_bact"/>
    <property type="match status" value="1"/>
</dbReference>
<dbReference type="InterPro" id="IPR023366">
    <property type="entry name" value="ATP_synth_asu-like_sf"/>
</dbReference>
<dbReference type="InterPro" id="IPR000793">
    <property type="entry name" value="ATP_synth_asu_C"/>
</dbReference>
<dbReference type="InterPro" id="IPR038376">
    <property type="entry name" value="ATP_synth_asu_C_sf"/>
</dbReference>
<dbReference type="InterPro" id="IPR033732">
    <property type="entry name" value="ATP_synth_F1_a_nt-bd_dom"/>
</dbReference>
<dbReference type="InterPro" id="IPR005294">
    <property type="entry name" value="ATP_synth_F1_asu"/>
</dbReference>
<dbReference type="InterPro" id="IPR004100">
    <property type="entry name" value="ATPase_F1/V1/A1_a/bsu_N"/>
</dbReference>
<dbReference type="InterPro" id="IPR036121">
    <property type="entry name" value="ATPase_F1/V1/A1_a/bsu_N_sf"/>
</dbReference>
<dbReference type="InterPro" id="IPR000194">
    <property type="entry name" value="ATPase_F1/V1/A1_a/bsu_nucl-bd"/>
</dbReference>
<dbReference type="InterPro" id="IPR027417">
    <property type="entry name" value="P-loop_NTPase"/>
</dbReference>
<dbReference type="NCBIfam" id="TIGR00962">
    <property type="entry name" value="atpA"/>
    <property type="match status" value="1"/>
</dbReference>
<dbReference type="NCBIfam" id="NF009884">
    <property type="entry name" value="PRK13343.1"/>
    <property type="match status" value="1"/>
</dbReference>
<dbReference type="PANTHER" id="PTHR48082">
    <property type="entry name" value="ATP SYNTHASE SUBUNIT ALPHA, MITOCHONDRIAL"/>
    <property type="match status" value="1"/>
</dbReference>
<dbReference type="PANTHER" id="PTHR48082:SF2">
    <property type="entry name" value="ATP SYNTHASE SUBUNIT ALPHA, MITOCHONDRIAL"/>
    <property type="match status" value="1"/>
</dbReference>
<dbReference type="Pfam" id="PF00006">
    <property type="entry name" value="ATP-synt_ab"/>
    <property type="match status" value="1"/>
</dbReference>
<dbReference type="Pfam" id="PF00306">
    <property type="entry name" value="ATP-synt_ab_C"/>
    <property type="match status" value="1"/>
</dbReference>
<dbReference type="Pfam" id="PF02874">
    <property type="entry name" value="ATP-synt_ab_N"/>
    <property type="match status" value="1"/>
</dbReference>
<dbReference type="PIRSF" id="PIRSF039088">
    <property type="entry name" value="F_ATPase_subunit_alpha"/>
    <property type="match status" value="1"/>
</dbReference>
<dbReference type="SUPFAM" id="SSF47917">
    <property type="entry name" value="C-terminal domain of alpha and beta subunits of F1 ATP synthase"/>
    <property type="match status" value="1"/>
</dbReference>
<dbReference type="SUPFAM" id="SSF50615">
    <property type="entry name" value="N-terminal domain of alpha and beta subunits of F1 ATP synthase"/>
    <property type="match status" value="1"/>
</dbReference>
<dbReference type="SUPFAM" id="SSF52540">
    <property type="entry name" value="P-loop containing nucleoside triphosphate hydrolases"/>
    <property type="match status" value="1"/>
</dbReference>
<proteinExistence type="inferred from homology"/>
<feature type="chain" id="PRO_0000238268" description="ATP synthase subunit alpha">
    <location>
        <begin position="1"/>
        <end position="511"/>
    </location>
</feature>
<feature type="binding site" evidence="1">
    <location>
        <begin position="169"/>
        <end position="176"/>
    </location>
    <ligand>
        <name>ATP</name>
        <dbReference type="ChEBI" id="CHEBI:30616"/>
    </ligand>
</feature>
<feature type="site" description="Required for activity" evidence="1">
    <location>
        <position position="362"/>
    </location>
</feature>
<reference key="1">
    <citation type="journal article" date="2005" name="Nat. Biotechnol.">
        <title>The complete genome sequence of the meat-borne lactic acid bacterium Lactobacillus sakei 23K.</title>
        <authorList>
            <person name="Chaillou S."/>
            <person name="Champomier-Verges M.-C."/>
            <person name="Cornet M."/>
            <person name="Crutz-Le Coq A.-M."/>
            <person name="Dudez A.-M."/>
            <person name="Martin V."/>
            <person name="Beaufils S."/>
            <person name="Darbon-Rongere E."/>
            <person name="Bossy R."/>
            <person name="Loux V."/>
            <person name="Zagorec M."/>
        </authorList>
    </citation>
    <scope>NUCLEOTIDE SEQUENCE [LARGE SCALE GENOMIC DNA]</scope>
    <source>
        <strain>23K</strain>
    </source>
</reference>
<organism>
    <name type="scientific">Latilactobacillus sakei subsp. sakei (strain 23K)</name>
    <name type="common">Lactobacillus sakei subsp. sakei</name>
    <dbReference type="NCBI Taxonomy" id="314315"/>
    <lineage>
        <taxon>Bacteria</taxon>
        <taxon>Bacillati</taxon>
        <taxon>Bacillota</taxon>
        <taxon>Bacilli</taxon>
        <taxon>Lactobacillales</taxon>
        <taxon>Lactobacillaceae</taxon>
        <taxon>Latilactobacillus</taxon>
    </lineage>
</organism>
<keyword id="KW-0066">ATP synthesis</keyword>
<keyword id="KW-0067">ATP-binding</keyword>
<keyword id="KW-1003">Cell membrane</keyword>
<keyword id="KW-0139">CF(1)</keyword>
<keyword id="KW-0375">Hydrogen ion transport</keyword>
<keyword id="KW-0406">Ion transport</keyword>
<keyword id="KW-0472">Membrane</keyword>
<keyword id="KW-0547">Nucleotide-binding</keyword>
<keyword id="KW-1185">Reference proteome</keyword>
<keyword id="KW-1278">Translocase</keyword>
<keyword id="KW-0813">Transport</keyword>
<evidence type="ECO:0000255" key="1">
    <source>
        <dbReference type="HAMAP-Rule" id="MF_01346"/>
    </source>
</evidence>